<dbReference type="EC" id="1.1.-.-" evidence="1"/>
<dbReference type="EMBL" id="DS027052">
    <property type="protein sequence ID" value="EAW11661.1"/>
    <property type="molecule type" value="Genomic_DNA"/>
</dbReference>
<dbReference type="RefSeq" id="XP_001273087.1">
    <property type="nucleotide sequence ID" value="XM_001273086.1"/>
</dbReference>
<dbReference type="SMR" id="A1CFL2"/>
<dbReference type="STRING" id="344612.A1CFL2"/>
<dbReference type="GlyCosmos" id="A1CFL2">
    <property type="glycosylation" value="7 sites, No reported glycans"/>
</dbReference>
<dbReference type="EnsemblFungi" id="EAW11661">
    <property type="protein sequence ID" value="EAW11661"/>
    <property type="gene ID" value="ACLA_093600"/>
</dbReference>
<dbReference type="GeneID" id="4704849"/>
<dbReference type="KEGG" id="act:ACLA_093600"/>
<dbReference type="VEuPathDB" id="FungiDB:ACLA_093600"/>
<dbReference type="eggNOG" id="KOG1238">
    <property type="taxonomic scope" value="Eukaryota"/>
</dbReference>
<dbReference type="HOGENOM" id="CLU_002865_6_3_1"/>
<dbReference type="OMA" id="DYSECVM"/>
<dbReference type="OrthoDB" id="269227at2759"/>
<dbReference type="UniPathway" id="UPA00918"/>
<dbReference type="Proteomes" id="UP000006701">
    <property type="component" value="Unassembled WGS sequence"/>
</dbReference>
<dbReference type="GO" id="GO:0005938">
    <property type="term" value="C:cell cortex"/>
    <property type="evidence" value="ECO:0007669"/>
    <property type="project" value="UniProtKB-SubCell"/>
</dbReference>
<dbReference type="GO" id="GO:0031012">
    <property type="term" value="C:extracellular matrix"/>
    <property type="evidence" value="ECO:0000250"/>
    <property type="project" value="GO_Central"/>
</dbReference>
<dbReference type="GO" id="GO:0005576">
    <property type="term" value="C:extracellular region"/>
    <property type="evidence" value="ECO:0007669"/>
    <property type="project" value="UniProtKB-SubCell"/>
</dbReference>
<dbReference type="GO" id="GO:0005773">
    <property type="term" value="C:vacuole"/>
    <property type="evidence" value="ECO:0007669"/>
    <property type="project" value="UniProtKB-SubCell"/>
</dbReference>
<dbReference type="GO" id="GO:0050660">
    <property type="term" value="F:flavin adenine dinucleotide binding"/>
    <property type="evidence" value="ECO:0007669"/>
    <property type="project" value="InterPro"/>
</dbReference>
<dbReference type="GO" id="GO:0016491">
    <property type="term" value="F:oxidoreductase activity"/>
    <property type="evidence" value="ECO:0000250"/>
    <property type="project" value="GO_Central"/>
</dbReference>
<dbReference type="GO" id="GO:0016614">
    <property type="term" value="F:oxidoreductase activity, acting on CH-OH group of donors"/>
    <property type="evidence" value="ECO:0007669"/>
    <property type="project" value="InterPro"/>
</dbReference>
<dbReference type="GO" id="GO:0140723">
    <property type="term" value="P:patulin biosynthetic process"/>
    <property type="evidence" value="ECO:0000250"/>
    <property type="project" value="GO_Central"/>
</dbReference>
<dbReference type="Gene3D" id="3.50.50.60">
    <property type="entry name" value="FAD/NAD(P)-binding domain"/>
    <property type="match status" value="1"/>
</dbReference>
<dbReference type="Gene3D" id="3.30.560.10">
    <property type="entry name" value="Glucose Oxidase, domain 3"/>
    <property type="match status" value="1"/>
</dbReference>
<dbReference type="InterPro" id="IPR036188">
    <property type="entry name" value="FAD/NAD-bd_sf"/>
</dbReference>
<dbReference type="InterPro" id="IPR012132">
    <property type="entry name" value="GMC_OxRdtase"/>
</dbReference>
<dbReference type="InterPro" id="IPR000172">
    <property type="entry name" value="GMC_OxRdtase_N"/>
</dbReference>
<dbReference type="InterPro" id="IPR007867">
    <property type="entry name" value="GMC_OxRtase_C"/>
</dbReference>
<dbReference type="PANTHER" id="PTHR11552:SF138">
    <property type="entry name" value="DEHYDROGENASE PKFF-RELATED"/>
    <property type="match status" value="1"/>
</dbReference>
<dbReference type="PANTHER" id="PTHR11552">
    <property type="entry name" value="GLUCOSE-METHANOL-CHOLINE GMC OXIDOREDUCTASE"/>
    <property type="match status" value="1"/>
</dbReference>
<dbReference type="Pfam" id="PF05199">
    <property type="entry name" value="GMC_oxred_C"/>
    <property type="match status" value="1"/>
</dbReference>
<dbReference type="Pfam" id="PF00732">
    <property type="entry name" value="GMC_oxred_N"/>
    <property type="match status" value="1"/>
</dbReference>
<dbReference type="PIRSF" id="PIRSF000137">
    <property type="entry name" value="Alcohol_oxidase"/>
    <property type="match status" value="1"/>
</dbReference>
<dbReference type="SUPFAM" id="SSF54373">
    <property type="entry name" value="FAD-linked reductases, C-terminal domain"/>
    <property type="match status" value="1"/>
</dbReference>
<dbReference type="SUPFAM" id="SSF51905">
    <property type="entry name" value="FAD/NAD(P)-binding domain"/>
    <property type="match status" value="1"/>
</dbReference>
<dbReference type="PROSITE" id="PS00624">
    <property type="entry name" value="GMC_OXRED_2"/>
    <property type="match status" value="1"/>
</dbReference>
<organism>
    <name type="scientific">Aspergillus clavatus (strain ATCC 1007 / CBS 513.65 / DSM 816 / NCTC 3887 / NRRL 1 / QM 1276 / 107)</name>
    <dbReference type="NCBI Taxonomy" id="344612"/>
    <lineage>
        <taxon>Eukaryota</taxon>
        <taxon>Fungi</taxon>
        <taxon>Dikarya</taxon>
        <taxon>Ascomycota</taxon>
        <taxon>Pezizomycotina</taxon>
        <taxon>Eurotiomycetes</taxon>
        <taxon>Eurotiomycetidae</taxon>
        <taxon>Eurotiales</taxon>
        <taxon>Aspergillaceae</taxon>
        <taxon>Aspergillus</taxon>
        <taxon>Aspergillus subgen. Fumigati</taxon>
    </lineage>
</organism>
<keyword id="KW-0134">Cell wall</keyword>
<keyword id="KW-0963">Cytoplasm</keyword>
<keyword id="KW-0274">FAD</keyword>
<keyword id="KW-0285">Flavoprotein</keyword>
<keyword id="KW-0325">Glycoprotein</keyword>
<keyword id="KW-0560">Oxidoreductase</keyword>
<keyword id="KW-1185">Reference proteome</keyword>
<keyword id="KW-0964">Secreted</keyword>
<keyword id="KW-0732">Signal</keyword>
<keyword id="KW-0926">Vacuole</keyword>
<feature type="signal peptide" evidence="4">
    <location>
        <begin position="1"/>
        <end position="20"/>
    </location>
</feature>
<feature type="chain" id="PRO_5002632926" description="Patulin synthase" evidence="4">
    <location>
        <begin position="21"/>
        <end position="628"/>
    </location>
</feature>
<feature type="active site" description="Proton acceptor" evidence="2">
    <location>
        <position position="564"/>
    </location>
</feature>
<feature type="binding site" evidence="2">
    <location>
        <begin position="60"/>
        <end position="61"/>
    </location>
    <ligand>
        <name>FAD</name>
        <dbReference type="ChEBI" id="CHEBI:57692"/>
    </ligand>
</feature>
<feature type="binding site" evidence="2">
    <location>
        <begin position="81"/>
        <end position="82"/>
    </location>
    <ligand>
        <name>FAD</name>
        <dbReference type="ChEBI" id="CHEBI:57692"/>
    </ligand>
</feature>
<feature type="binding site" evidence="2">
    <location>
        <begin position="147"/>
        <end position="150"/>
    </location>
    <ligand>
        <name>FAD</name>
        <dbReference type="ChEBI" id="CHEBI:57692"/>
    </ligand>
</feature>
<feature type="binding site" evidence="2">
    <location>
        <position position="598"/>
    </location>
    <ligand>
        <name>FAD</name>
        <dbReference type="ChEBI" id="CHEBI:57692"/>
    </ligand>
</feature>
<feature type="binding site" evidence="2">
    <location>
        <begin position="609"/>
        <end position="610"/>
    </location>
    <ligand>
        <name>FAD</name>
        <dbReference type="ChEBI" id="CHEBI:57692"/>
    </ligand>
</feature>
<feature type="glycosylation site" description="N-linked (GlcNAc...) asparagine" evidence="5">
    <location>
        <position position="48"/>
    </location>
</feature>
<feature type="glycosylation site" description="N-linked (GlcNAc...) asparagine" evidence="5">
    <location>
        <position position="92"/>
    </location>
</feature>
<feature type="glycosylation site" description="N-linked (GlcNAc...) asparagine" evidence="5">
    <location>
        <position position="197"/>
    </location>
</feature>
<feature type="glycosylation site" description="N-linked (GlcNAc...) asparagine" evidence="5">
    <location>
        <position position="260"/>
    </location>
</feature>
<feature type="glycosylation site" description="N-linked (GlcNAc...) asparagine" evidence="5">
    <location>
        <position position="386"/>
    </location>
</feature>
<feature type="glycosylation site" description="N-linked (GlcNAc...) asparagine" evidence="5">
    <location>
        <position position="429"/>
    </location>
</feature>
<feature type="glycosylation site" description="N-linked (GlcNAc...) asparagine" evidence="5">
    <location>
        <position position="486"/>
    </location>
</feature>
<reference key="1">
    <citation type="journal article" date="2008" name="PLoS Genet.">
        <title>Genomic islands in the pathogenic filamentous fungus Aspergillus fumigatus.</title>
        <authorList>
            <person name="Fedorova N.D."/>
            <person name="Khaldi N."/>
            <person name="Joardar V.S."/>
            <person name="Maiti R."/>
            <person name="Amedeo P."/>
            <person name="Anderson M.J."/>
            <person name="Crabtree J."/>
            <person name="Silva J.C."/>
            <person name="Badger J.H."/>
            <person name="Albarraq A."/>
            <person name="Angiuoli S."/>
            <person name="Bussey H."/>
            <person name="Bowyer P."/>
            <person name="Cotty P.J."/>
            <person name="Dyer P.S."/>
            <person name="Egan A."/>
            <person name="Galens K."/>
            <person name="Fraser-Liggett C.M."/>
            <person name="Haas B.J."/>
            <person name="Inman J.M."/>
            <person name="Kent R."/>
            <person name="Lemieux S."/>
            <person name="Malavazi I."/>
            <person name="Orvis J."/>
            <person name="Roemer T."/>
            <person name="Ronning C.M."/>
            <person name="Sundaram J.P."/>
            <person name="Sutton G."/>
            <person name="Turner G."/>
            <person name="Venter J.C."/>
            <person name="White O.R."/>
            <person name="Whitty B.R."/>
            <person name="Youngman P."/>
            <person name="Wolfe K.H."/>
            <person name="Goldman G.H."/>
            <person name="Wortman J.R."/>
            <person name="Jiang B."/>
            <person name="Denning D.W."/>
            <person name="Nierman W.C."/>
        </authorList>
    </citation>
    <scope>NUCLEOTIDE SEQUENCE [LARGE SCALE GENOMIC DNA]</scope>
    <source>
        <strain>ATCC 1007 / CBS 513.65 / DSM 816 / NCTC 3887 / NRRL 1 / QM 1276 / 107</strain>
    </source>
</reference>
<reference key="2">
    <citation type="journal article" date="2004" name="Int. J. Epidemiol.">
        <title>Clinical trial of patulin in the common cold. 1944.</title>
        <authorList>
            <consortium name="Patulin Clinical Trials Committee, Medical Research Council"/>
        </authorList>
    </citation>
    <scope>BIOTECHNOLOGY</scope>
</reference>
<reference key="3">
    <citation type="journal article" date="2009" name="Microbiology">
        <title>Molecular cloning and functional characterization of two CYP619 cytochrome P450s involved in biosynthesis of patulin in Aspergillus clavatus.</title>
        <authorList>
            <person name="Artigot M.P."/>
            <person name="Loiseau N."/>
            <person name="Laffitte J."/>
            <person name="Mas-Reguieg L."/>
            <person name="Tadrist S."/>
            <person name="Oswald I.P."/>
            <person name="Puel O."/>
        </authorList>
    </citation>
    <scope>FUNCTION</scope>
</reference>
<reference key="4">
    <citation type="journal article" date="2012" name="Food Chem. Toxicol.">
        <title>DNA damage in organs of mice treated acutely with patulin, a known mycotoxin.</title>
        <authorList>
            <person name="de Melo F.T."/>
            <person name="de Oliveira I.M."/>
            <person name="Greggio S."/>
            <person name="Dacosta J.C."/>
            <person name="Guecheva T.N."/>
            <person name="Saffi J."/>
            <person name="Henriques J.A."/>
            <person name="Rosa R.M."/>
        </authorList>
    </citation>
    <scope>BIOTECHNOLOGY</scope>
</reference>
<reference key="5">
    <citation type="journal article" date="2016" name="Tumor Biol.">
        <title>The potential effect of patulin on mice bearing melanoma cells: an anti-tumour or carcinogenic effect?</title>
        <authorList>
            <person name="Boussabbeh M."/>
            <person name="Ben Salem I."/>
            <person name="Rjiba-Touati K."/>
            <person name="Bouyahya C."/>
            <person name="Neffati F."/>
            <person name="Najjar M.F."/>
            <person name="Bacha H."/>
            <person name="Abid-Essefi S."/>
        </authorList>
    </citation>
    <scope>BIOTECHNOLOGY</scope>
</reference>
<gene>
    <name evidence="9" type="primary">patE</name>
    <name type="ORF">ACLA_093600</name>
</gene>
<accession>A1CFL2</accession>
<name>PATE_ASPCL</name>
<sequence>MRPIPSILGALGAFATLSAAAPLESTLYGPGASHARSMLGSSFGVPGNQTFDYVVIGGGTAGLAIASRLAEQGAGTVAVIEAGGFYELNNGNLSQIPANDAYYVGKDLDDWQPGVDWGFHTVPQAGAYGRASHYARGKCLGGSSARNYMAYQRGTKSSYQRWADMVGDQSYAWENFLPFFEKSLHFTPANDALRGANATVQYDPAVLGNGQGPLSVTYSHYVQSFATWAQKAFLEMGLAVRNCFQSGELLGQSFGMYTINATTMHRESSETSFLRRALAYPNFMVFQSTLAKRILFDGKKRAVAVQLDTQGYRYTLTARKEVVLSAGAFQSPQLLMVSGVGPAATLQQHGIPLVADRPGVGQNLQDHIIYAPSYRVDLITQSALLNATFEAQANRDYHERAAGIYANPTSDILAWEKIPEPKRSAWLSNTTRRALAQYPADWPEIEFLTMGGFFGYQNNYVRDNPSDGYNYASLAVSLCTPRSRGNVSIASADAAVPPLINPNWLTDPVDVELAVAAFKRARDFFGTSALKPVLIGDEYFPGERVATDAQIEDHVRKSFDTIFHASCTCAMGKREDQMAVVDSKARVIGVDALRVVDASAFPMLPPGHPQSTIYALAEKIACDISGAC</sequence>
<evidence type="ECO:0000250" key="1">
    <source>
        <dbReference type="UniProtKB" id="A0A075TRK9"/>
    </source>
</evidence>
<evidence type="ECO:0000250" key="2">
    <source>
        <dbReference type="UniProtKB" id="E4QP00"/>
    </source>
</evidence>
<evidence type="ECO:0000250" key="3">
    <source>
        <dbReference type="UniProtKB" id="Q12062"/>
    </source>
</evidence>
<evidence type="ECO:0000255" key="4"/>
<evidence type="ECO:0000255" key="5">
    <source>
        <dbReference type="PROSITE-ProRule" id="PRU00498"/>
    </source>
</evidence>
<evidence type="ECO:0000269" key="6">
    <source>
    </source>
</evidence>
<evidence type="ECO:0000269" key="7">
    <source>
    </source>
</evidence>
<evidence type="ECO:0000269" key="8">
    <source>
    </source>
</evidence>
<evidence type="ECO:0000303" key="9">
    <source>
    </source>
</evidence>
<evidence type="ECO:0000305" key="10"/>
<evidence type="ECO:0000305" key="11">
    <source>
    </source>
</evidence>
<proteinExistence type="evidence at protein level"/>
<comment type="function">
    <text evidence="1 11">Patulin synthase; part of the gene cluster that mediates the biosynthesis of patulin, an acetate-derived tetraketide mycotoxin produced by several fungal species that shows antimicrobial properties against several bacteria (By similarity). PatE catalyzes the last step of the pathway which is the conversion of E-ascladiol to patulin (By similarity). The pathway begins with the synthesis of 6-methylsalicylic acid by the polyketide synthase (PKS) patK via condensation of acetate and malonate units. The 6-methylsalicylic acid decarboxylase patG then catalyzes the decarboxylation of 6-methylsalicylic acid to yield m-cresol (also known as 3-methylphenol). These first reactions occur in the cytosol. The intermediate m-cresol is then transported into the endoplasmic reticulum where the cytochrome P450 monooxygenase patH converts it to m-hydroxybenzyl alcohol, which is further converted to gentisyl alcohol by the cytochrome P450 monooxygenase patI. The oxidoreductases patJ and patO further convert gentisyl alcohol to isoepoxydon in the vacuole. PatN catalyzes then the transformation of isoepoxydon into phyllostine. The cluster protein patF is responsible for the conversion from phyllostine to neopatulin whereas the alcohol dehydrogenase patD converts neopatulin to E-ascladiol. The steps between isoepoxydon and E-ascladiol occur in the cytosol, and E-ascladiol is probably secreted to the extracellular space by one of the cluster-specific transporters patC or patM. Finally, the secreted patulin synthase patE catalyzes the conversion of E-ascladiol to patulin (Probable) (PubMed:19383676).</text>
</comment>
<comment type="catalytic activity">
    <reaction evidence="1">
        <text>(E)-ascladiol + A = patulin + AH2</text>
        <dbReference type="Rhea" id="RHEA:62228"/>
        <dbReference type="ChEBI" id="CHEBI:13193"/>
        <dbReference type="ChEBI" id="CHEBI:17499"/>
        <dbReference type="ChEBI" id="CHEBI:74926"/>
        <dbReference type="ChEBI" id="CHEBI:145112"/>
    </reaction>
    <physiologicalReaction direction="left-to-right" evidence="1">
        <dbReference type="Rhea" id="RHEA:62229"/>
    </physiologicalReaction>
</comment>
<comment type="cofactor">
    <cofactor evidence="2">
        <name>FAD</name>
        <dbReference type="ChEBI" id="CHEBI:57692"/>
    </cofactor>
</comment>
<comment type="pathway">
    <text evidence="11">Mycotoxin biosynthesis; patulin biosynthesis.</text>
</comment>
<comment type="subunit">
    <text evidence="3">Homodimer.</text>
</comment>
<comment type="subcellular location">
    <subcellularLocation>
        <location evidence="1">Cytoplasm</location>
        <location evidence="1">Cell cortex</location>
    </subcellularLocation>
    <subcellularLocation>
        <location evidence="1">Vacuole</location>
    </subcellularLocation>
    <subcellularLocation>
        <location evidence="1">Secreted</location>
    </subcellularLocation>
    <subcellularLocation>
        <location evidence="1">Secreted</location>
        <location evidence="1">Cell wall</location>
    </subcellularLocation>
</comment>
<comment type="biotechnology">
    <text evidence="6 7 8">Patulin was originally used as an antibiotic and specifically trialed to be used against the common cold, but it is no longer used for that purpose since it has been shown to induce immunological, neurological and gastrointestinal effects (PubMed:15082620). Genotoxic effects of patulin with dose-dependent increase in DNA strand breaks in brain, liver and kidneys have been detected in mice (PubMed:22222931). However, more recently, it has been proposed that patulin might also have anti-tumor properties (PubMed:26619846).</text>
</comment>
<comment type="similarity">
    <text evidence="10">Belongs to the GMC oxidoreductase family.</text>
</comment>
<protein>
    <recommendedName>
        <fullName evidence="1">Patulin synthase</fullName>
        <ecNumber evidence="1">1.1.-.-</ecNumber>
    </recommendedName>
    <alternativeName>
        <fullName evidence="9">Dehydrogenase patE</fullName>
    </alternativeName>
    <alternativeName>
        <fullName evidence="9">Patulin synthesis protein E</fullName>
    </alternativeName>
</protein>